<comment type="subunit">
    <text evidence="1">Part of the 50S ribosomal subunit.</text>
</comment>
<comment type="subcellular location">
    <subcellularLocation>
        <location>Plastid</location>
        <location>Chloroplast</location>
    </subcellularLocation>
</comment>
<comment type="similarity">
    <text evidence="4">Belongs to the universal ribosomal protein uL2 family.</text>
</comment>
<proteinExistence type="inferred from homology"/>
<geneLocation type="chloroplast"/>
<feature type="chain" id="PRO_0000129702" description="Large ribosomal subunit protein uL2cz/uL2cy">
    <location>
        <begin position="1"/>
        <end position="273"/>
    </location>
</feature>
<feature type="region of interest" description="Disordered" evidence="3">
    <location>
        <begin position="1"/>
        <end position="22"/>
    </location>
</feature>
<feature type="region of interest" description="Disordered" evidence="3">
    <location>
        <begin position="225"/>
        <end position="273"/>
    </location>
</feature>
<dbReference type="EMBL" id="AP006714">
    <property type="protein sequence ID" value="BAD27335.1"/>
    <property type="molecule type" value="Genomic_DNA"/>
</dbReference>
<dbReference type="EMBL" id="AP006714">
    <property type="protein sequence ID" value="BAD27384.1"/>
    <property type="molecule type" value="Genomic_DNA"/>
</dbReference>
<dbReference type="SMR" id="Q6ENS1"/>
<dbReference type="GO" id="GO:0009507">
    <property type="term" value="C:chloroplast"/>
    <property type="evidence" value="ECO:0007669"/>
    <property type="project" value="UniProtKB-SubCell"/>
</dbReference>
<dbReference type="GO" id="GO:0005762">
    <property type="term" value="C:mitochondrial large ribosomal subunit"/>
    <property type="evidence" value="ECO:0007669"/>
    <property type="project" value="TreeGrafter"/>
</dbReference>
<dbReference type="GO" id="GO:0019843">
    <property type="term" value="F:rRNA binding"/>
    <property type="evidence" value="ECO:0007669"/>
    <property type="project" value="UniProtKB-UniRule"/>
</dbReference>
<dbReference type="GO" id="GO:0003735">
    <property type="term" value="F:structural constituent of ribosome"/>
    <property type="evidence" value="ECO:0007669"/>
    <property type="project" value="InterPro"/>
</dbReference>
<dbReference type="GO" id="GO:0016740">
    <property type="term" value="F:transferase activity"/>
    <property type="evidence" value="ECO:0007669"/>
    <property type="project" value="InterPro"/>
</dbReference>
<dbReference type="GO" id="GO:0032543">
    <property type="term" value="P:mitochondrial translation"/>
    <property type="evidence" value="ECO:0007669"/>
    <property type="project" value="TreeGrafter"/>
</dbReference>
<dbReference type="FunFam" id="4.10.950.10:FF:000001">
    <property type="entry name" value="50S ribosomal protein L2"/>
    <property type="match status" value="1"/>
</dbReference>
<dbReference type="FunFam" id="2.30.30.30:FF:000008">
    <property type="entry name" value="50S ribosomal protein L2, chloroplastic"/>
    <property type="match status" value="1"/>
</dbReference>
<dbReference type="FunFam" id="2.40.50.140:FF:000029">
    <property type="entry name" value="50S ribosomal protein L2, chloroplastic"/>
    <property type="match status" value="1"/>
</dbReference>
<dbReference type="Gene3D" id="2.30.30.30">
    <property type="match status" value="1"/>
</dbReference>
<dbReference type="Gene3D" id="2.40.50.140">
    <property type="entry name" value="Nucleic acid-binding proteins"/>
    <property type="match status" value="1"/>
</dbReference>
<dbReference type="Gene3D" id="4.10.950.10">
    <property type="entry name" value="Ribosomal protein L2, domain 3"/>
    <property type="match status" value="1"/>
</dbReference>
<dbReference type="HAMAP" id="MF_01320_B">
    <property type="entry name" value="Ribosomal_uL2_B"/>
    <property type="match status" value="1"/>
</dbReference>
<dbReference type="InterPro" id="IPR012340">
    <property type="entry name" value="NA-bd_OB-fold"/>
</dbReference>
<dbReference type="InterPro" id="IPR014722">
    <property type="entry name" value="Rib_uL2_dom2"/>
</dbReference>
<dbReference type="InterPro" id="IPR002171">
    <property type="entry name" value="Ribosomal_uL2"/>
</dbReference>
<dbReference type="InterPro" id="IPR005880">
    <property type="entry name" value="Ribosomal_uL2_bac/org-type"/>
</dbReference>
<dbReference type="InterPro" id="IPR022669">
    <property type="entry name" value="Ribosomal_uL2_C"/>
</dbReference>
<dbReference type="InterPro" id="IPR022671">
    <property type="entry name" value="Ribosomal_uL2_CS"/>
</dbReference>
<dbReference type="InterPro" id="IPR014726">
    <property type="entry name" value="Ribosomal_uL2_dom3"/>
</dbReference>
<dbReference type="InterPro" id="IPR022666">
    <property type="entry name" value="Ribosomal_uL2_RNA-bd_dom"/>
</dbReference>
<dbReference type="InterPro" id="IPR008991">
    <property type="entry name" value="Translation_prot_SH3-like_sf"/>
</dbReference>
<dbReference type="NCBIfam" id="TIGR01171">
    <property type="entry name" value="rplB_bact"/>
    <property type="match status" value="1"/>
</dbReference>
<dbReference type="PANTHER" id="PTHR13691:SF57">
    <property type="entry name" value="LARGE RIBOSOMAL SUBUNIT PROTEIN UL2CZ_UL2CY"/>
    <property type="match status" value="1"/>
</dbReference>
<dbReference type="PANTHER" id="PTHR13691">
    <property type="entry name" value="RIBOSOMAL PROTEIN L2"/>
    <property type="match status" value="1"/>
</dbReference>
<dbReference type="Pfam" id="PF00181">
    <property type="entry name" value="Ribosomal_L2"/>
    <property type="match status" value="1"/>
</dbReference>
<dbReference type="Pfam" id="PF03947">
    <property type="entry name" value="Ribosomal_L2_C"/>
    <property type="match status" value="1"/>
</dbReference>
<dbReference type="PIRSF" id="PIRSF002158">
    <property type="entry name" value="Ribosomal_L2"/>
    <property type="match status" value="1"/>
</dbReference>
<dbReference type="SMART" id="SM01383">
    <property type="entry name" value="Ribosomal_L2"/>
    <property type="match status" value="1"/>
</dbReference>
<dbReference type="SMART" id="SM01382">
    <property type="entry name" value="Ribosomal_L2_C"/>
    <property type="match status" value="1"/>
</dbReference>
<dbReference type="SUPFAM" id="SSF50249">
    <property type="entry name" value="Nucleic acid-binding proteins"/>
    <property type="match status" value="1"/>
</dbReference>
<dbReference type="SUPFAM" id="SSF50104">
    <property type="entry name" value="Translation proteins SH3-like domain"/>
    <property type="match status" value="1"/>
</dbReference>
<dbReference type="PROSITE" id="PS00467">
    <property type="entry name" value="RIBOSOMAL_L2"/>
    <property type="match status" value="1"/>
</dbReference>
<protein>
    <recommendedName>
        <fullName evidence="2">Large ribosomal subunit protein uL2cz/uL2cy</fullName>
    </recommendedName>
    <alternativeName>
        <fullName evidence="4">50S ribosomal protein L2, chloroplastic</fullName>
    </alternativeName>
</protein>
<evidence type="ECO:0000250" key="1"/>
<evidence type="ECO:0000255" key="2">
    <source>
        <dbReference type="HAMAP-Rule" id="MF_01320"/>
    </source>
</evidence>
<evidence type="ECO:0000256" key="3">
    <source>
        <dbReference type="SAM" id="MobiDB-lite"/>
    </source>
</evidence>
<evidence type="ECO:0000305" key="4"/>
<accession>Q6ENS1</accession>
<name>RK2_SACOF</name>
<sequence length="273" mass="30051">MAKHLYKTPIPSTRKGTVDRQVKSNPRNKLIHGRHRCGKGRNARGIITARHRGGGHKRLYRKIDFRRNQKDISGRIVTIEYDPNRNAYICLIHYGDGEKRYILHPRGAIIGDTIVSGTKVPISMGNALPLTDMPLGTAIHNIEITRGRGGQLARAAGAVAKLIAKEGKLATLRLPSGEVRLVSQNCLATVGQVGNVGVNQKSLGRAGSKCWLGKRPVVRGVVMNPVDHPHGGGEGKAPIGRKKPTTPWGYPALGRRTRKRKKYSDSFILRRRK</sequence>
<gene>
    <name type="primary">rpl2-A</name>
</gene>
<gene>
    <name type="primary">rpl2-B</name>
</gene>
<organism>
    <name type="scientific">Saccharum officinarum</name>
    <name type="common">Sugarcane</name>
    <dbReference type="NCBI Taxonomy" id="4547"/>
    <lineage>
        <taxon>Eukaryota</taxon>
        <taxon>Viridiplantae</taxon>
        <taxon>Streptophyta</taxon>
        <taxon>Embryophyta</taxon>
        <taxon>Tracheophyta</taxon>
        <taxon>Spermatophyta</taxon>
        <taxon>Magnoliopsida</taxon>
        <taxon>Liliopsida</taxon>
        <taxon>Poales</taxon>
        <taxon>Poaceae</taxon>
        <taxon>PACMAD clade</taxon>
        <taxon>Panicoideae</taxon>
        <taxon>Andropogonodae</taxon>
        <taxon>Andropogoneae</taxon>
        <taxon>Saccharinae</taxon>
        <taxon>Saccharum</taxon>
        <taxon>Saccharum officinarum species complex</taxon>
    </lineage>
</organism>
<reference key="1">
    <citation type="journal article" date="2004" name="DNA Res.">
        <title>Complete nucleotide sequence of the sugarcane (Saccharum officinarum) chloroplast genome: a comparative analysis of four monocot chloroplast genomes.</title>
        <authorList>
            <person name="Asano T."/>
            <person name="Tsudzuki T."/>
            <person name="Takahashi S."/>
            <person name="Shimada H."/>
            <person name="Kadowaki K."/>
        </authorList>
    </citation>
    <scope>NUCLEOTIDE SEQUENCE [LARGE SCALE GENOMIC DNA]</scope>
</reference>
<keyword id="KW-0150">Chloroplast</keyword>
<keyword id="KW-0934">Plastid</keyword>
<keyword id="KW-0687">Ribonucleoprotein</keyword>
<keyword id="KW-0689">Ribosomal protein</keyword>